<protein>
    <recommendedName>
        <fullName>Spermine synthase</fullName>
        <shortName>SPMSY</shortName>
        <ecNumber evidence="1">2.5.1.22</ecNumber>
    </recommendedName>
    <alternativeName>
        <fullName>Spermidine aminopropyltransferase</fullName>
    </alternativeName>
</protein>
<accession>Q3SZA5</accession>
<accession>A1L596</accession>
<dbReference type="EC" id="2.5.1.22" evidence="1"/>
<dbReference type="EMBL" id="BT029883">
    <property type="protein sequence ID" value="ABM21558.1"/>
    <property type="molecule type" value="mRNA"/>
</dbReference>
<dbReference type="EMBL" id="BC103012">
    <property type="protein sequence ID" value="AAI03013.1"/>
    <property type="molecule type" value="mRNA"/>
</dbReference>
<dbReference type="RefSeq" id="NP_001030548.1">
    <property type="nucleotide sequence ID" value="NM_001035471.1"/>
</dbReference>
<dbReference type="SMR" id="Q3SZA5"/>
<dbReference type="FunCoup" id="Q3SZA5">
    <property type="interactions" value="1694"/>
</dbReference>
<dbReference type="STRING" id="9913.ENSBTAP00000071420"/>
<dbReference type="PaxDb" id="9913-ENSBTAP00000024458"/>
<dbReference type="Ensembl" id="ENSBTAT00000081528.2">
    <property type="protein sequence ID" value="ENSBTAP00000071420.1"/>
    <property type="gene ID" value="ENSBTAG00000018382.7"/>
</dbReference>
<dbReference type="GeneID" id="615950"/>
<dbReference type="KEGG" id="bta:615950"/>
<dbReference type="CTD" id="6611"/>
<dbReference type="VEuPathDB" id="HostDB:ENSBTAG00000018382"/>
<dbReference type="VGNC" id="VGNC:35035">
    <property type="gene designation" value="SMS"/>
</dbReference>
<dbReference type="eggNOG" id="KOG1562">
    <property type="taxonomic scope" value="Eukaryota"/>
</dbReference>
<dbReference type="GeneTree" id="ENSGT00870000136506"/>
<dbReference type="HOGENOM" id="CLU_048650_1_0_1"/>
<dbReference type="InParanoid" id="Q3SZA5"/>
<dbReference type="OMA" id="PDGKEPI"/>
<dbReference type="OrthoDB" id="5953636at2759"/>
<dbReference type="Reactome" id="R-BTA-351202">
    <property type="pathway name" value="Metabolism of polyamines"/>
</dbReference>
<dbReference type="UniPathway" id="UPA00249">
    <property type="reaction ID" value="UER00315"/>
</dbReference>
<dbReference type="Proteomes" id="UP000009136">
    <property type="component" value="Chromosome X"/>
</dbReference>
<dbReference type="Bgee" id="ENSBTAG00000018382">
    <property type="expression patterns" value="Expressed in caput epididymis and 106 other cell types or tissues"/>
</dbReference>
<dbReference type="GO" id="GO:0016768">
    <property type="term" value="F:spermine synthase activity"/>
    <property type="evidence" value="ECO:0000318"/>
    <property type="project" value="GO_Central"/>
</dbReference>
<dbReference type="GO" id="GO:0006597">
    <property type="term" value="P:spermine biosynthetic process"/>
    <property type="evidence" value="ECO:0000318"/>
    <property type="project" value="GO_Central"/>
</dbReference>
<dbReference type="CDD" id="cd02440">
    <property type="entry name" value="AdoMet_MTases"/>
    <property type="match status" value="1"/>
</dbReference>
<dbReference type="FunFam" id="2.30.140.10:FF:000005">
    <property type="entry name" value="Spermine synthase"/>
    <property type="match status" value="1"/>
</dbReference>
<dbReference type="FunFam" id="3.30.160.110:FF:000002">
    <property type="entry name" value="spermine synthase"/>
    <property type="match status" value="1"/>
</dbReference>
<dbReference type="FunFam" id="3.40.50.150:FF:000059">
    <property type="entry name" value="spermine synthase"/>
    <property type="match status" value="1"/>
</dbReference>
<dbReference type="Gene3D" id="3.30.160.110">
    <property type="entry name" value="Siroheme synthase, domain 2"/>
    <property type="match status" value="1"/>
</dbReference>
<dbReference type="Gene3D" id="2.30.140.10">
    <property type="entry name" value="Spermidine synthase, tetramerisation domain"/>
    <property type="match status" value="1"/>
</dbReference>
<dbReference type="Gene3D" id="3.40.50.150">
    <property type="entry name" value="Vaccinia Virus protein VP39"/>
    <property type="match status" value="1"/>
</dbReference>
<dbReference type="InterPro" id="IPR030374">
    <property type="entry name" value="PABS"/>
</dbReference>
<dbReference type="InterPro" id="IPR030373">
    <property type="entry name" value="PABS_CS"/>
</dbReference>
<dbReference type="InterPro" id="IPR029063">
    <property type="entry name" value="SAM-dependent_MTases_sf"/>
</dbReference>
<dbReference type="InterPro" id="IPR035246">
    <property type="entry name" value="Spermidine_synt_N"/>
</dbReference>
<dbReference type="InterPro" id="IPR037163">
    <property type="entry name" value="Spermidine_synt_N_sf"/>
</dbReference>
<dbReference type="InterPro" id="IPR015576">
    <property type="entry name" value="Spermine_synthase_animal"/>
</dbReference>
<dbReference type="InterPro" id="IPR040900">
    <property type="entry name" value="SpmSyn_N"/>
</dbReference>
<dbReference type="PANTHER" id="PTHR46315">
    <property type="entry name" value="SPERMINE SYNTHASE"/>
    <property type="match status" value="1"/>
</dbReference>
<dbReference type="PANTHER" id="PTHR46315:SF1">
    <property type="entry name" value="SPERMINE SYNTHASE"/>
    <property type="match status" value="1"/>
</dbReference>
<dbReference type="Pfam" id="PF17284">
    <property type="entry name" value="Spermine_synt_N"/>
    <property type="match status" value="1"/>
</dbReference>
<dbReference type="Pfam" id="PF01564">
    <property type="entry name" value="Spermine_synth"/>
    <property type="match status" value="1"/>
</dbReference>
<dbReference type="Pfam" id="PF17950">
    <property type="entry name" value="SpmSyn_N"/>
    <property type="match status" value="1"/>
</dbReference>
<dbReference type="SUPFAM" id="SSF53335">
    <property type="entry name" value="S-adenosyl-L-methionine-dependent methyltransferases"/>
    <property type="match status" value="1"/>
</dbReference>
<dbReference type="PROSITE" id="PS01330">
    <property type="entry name" value="PABS_1"/>
    <property type="match status" value="1"/>
</dbReference>
<dbReference type="PROSITE" id="PS51006">
    <property type="entry name" value="PABS_2"/>
    <property type="match status" value="1"/>
</dbReference>
<keyword id="KW-0007">Acetylation</keyword>
<keyword id="KW-0597">Phosphoprotein</keyword>
<keyword id="KW-0620">Polyamine biosynthesis</keyword>
<keyword id="KW-1185">Reference proteome</keyword>
<keyword id="KW-0808">Transferase</keyword>
<proteinExistence type="evidence at transcript level"/>
<organism>
    <name type="scientific">Bos taurus</name>
    <name type="common">Bovine</name>
    <dbReference type="NCBI Taxonomy" id="9913"/>
    <lineage>
        <taxon>Eukaryota</taxon>
        <taxon>Metazoa</taxon>
        <taxon>Chordata</taxon>
        <taxon>Craniata</taxon>
        <taxon>Vertebrata</taxon>
        <taxon>Euteleostomi</taxon>
        <taxon>Mammalia</taxon>
        <taxon>Eutheria</taxon>
        <taxon>Laurasiatheria</taxon>
        <taxon>Artiodactyla</taxon>
        <taxon>Ruminantia</taxon>
        <taxon>Pecora</taxon>
        <taxon>Bovidae</taxon>
        <taxon>Bovinae</taxon>
        <taxon>Bos</taxon>
    </lineage>
</organism>
<name>SPSY_BOVIN</name>
<gene>
    <name type="primary">SMS</name>
</gene>
<sequence length="365" mass="41224">MAAARHSTLDFMLGAKADGETILKGLQSIFQEQGMTESVHTWQDHGYLATYINKNGSFANLRIYPHGLVLLDLQSYDGDAQGKEVDSLLNKVEERMKELSQDSTERVKRLPPIVRGGAIDRYWPTADGRLVEYDIDKVVYDEDSPYQNIKILHSKQFGNILILSGDVNLAESDLAYTRAIMGSGKEDYSGKDVLILGGGDGGILCEIVKLKPKMVTMVEIDQMVIDGCKKYMRKTCGDVLDNLKGDCYQVLIEDCIPVLKRYAKEGREFDYVINDLTAVPISTSPEEDSTWEFLRLILDLSMKVLKQDGKYFTQGNCVNLTEALSLYEEQLGRLYCPVEFSKEIVCVPSYLELWVFYTVWKKAKP</sequence>
<feature type="initiator methionine" description="Removed" evidence="1">
    <location>
        <position position="1"/>
    </location>
</feature>
<feature type="chain" id="PRO_0000239735" description="Spermine synthase">
    <location>
        <begin position="2"/>
        <end position="365"/>
    </location>
</feature>
<feature type="domain" description="PABS" evidence="2">
    <location>
        <begin position="121"/>
        <end position="361"/>
    </location>
</feature>
<feature type="active site" description="Proton acceptor" evidence="2">
    <location>
        <position position="275"/>
    </location>
</feature>
<feature type="binding site" evidence="1">
    <location>
        <position position="147"/>
    </location>
    <ligand>
        <name>S-adenosyl 3-(methylsulfanyl)propylamine</name>
        <dbReference type="ChEBI" id="CHEBI:57443"/>
    </ligand>
</feature>
<feature type="binding site" evidence="1">
    <location>
        <position position="176"/>
    </location>
    <ligand>
        <name>spermidine</name>
        <dbReference type="ChEBI" id="CHEBI:57834"/>
    </ligand>
</feature>
<feature type="binding site" evidence="1">
    <location>
        <position position="200"/>
    </location>
    <ligand>
        <name>spermidine</name>
        <dbReference type="ChEBI" id="CHEBI:57834"/>
    </ligand>
</feature>
<feature type="binding site" evidence="1">
    <location>
        <position position="219"/>
    </location>
    <ligand>
        <name>S-adenosyl 3-(methylsulfanyl)propylamine</name>
        <dbReference type="ChEBI" id="CHEBI:57443"/>
    </ligand>
</feature>
<feature type="binding site" evidence="1">
    <location>
        <begin position="254"/>
        <end position="255"/>
    </location>
    <ligand>
        <name>S-adenosyl 3-(methylsulfanyl)propylamine</name>
        <dbReference type="ChEBI" id="CHEBI:57443"/>
    </ligand>
</feature>
<feature type="binding site" evidence="1">
    <location>
        <position position="350"/>
    </location>
    <ligand>
        <name>spermidine</name>
        <dbReference type="ChEBI" id="CHEBI:57834"/>
    </ligand>
</feature>
<feature type="binding site" evidence="1">
    <location>
        <position position="352"/>
    </location>
    <ligand>
        <name>spermidine</name>
        <dbReference type="ChEBI" id="CHEBI:57834"/>
    </ligand>
</feature>
<feature type="modified residue" description="N-acetylalanine" evidence="1">
    <location>
        <position position="2"/>
    </location>
</feature>
<feature type="modified residue" description="Phosphoserine" evidence="1">
    <location>
        <position position="57"/>
    </location>
</feature>
<evidence type="ECO:0000250" key="1">
    <source>
        <dbReference type="UniProtKB" id="P52788"/>
    </source>
</evidence>
<evidence type="ECO:0000255" key="2">
    <source>
        <dbReference type="PROSITE-ProRule" id="PRU00354"/>
    </source>
</evidence>
<evidence type="ECO:0000305" key="3"/>
<reference key="1">
    <citation type="journal article" date="2005" name="BMC Genomics">
        <title>Characterization of 954 bovine full-CDS cDNA sequences.</title>
        <authorList>
            <person name="Harhay G.P."/>
            <person name="Sonstegard T.S."/>
            <person name="Keele J.W."/>
            <person name="Heaton M.P."/>
            <person name="Clawson M.L."/>
            <person name="Snelling W.M."/>
            <person name="Wiedmann R.T."/>
            <person name="Van Tassell C.P."/>
            <person name="Smith T.P.L."/>
        </authorList>
    </citation>
    <scope>NUCLEOTIDE SEQUENCE [LARGE SCALE MRNA]</scope>
</reference>
<reference key="2">
    <citation type="submission" date="2005-08" db="EMBL/GenBank/DDBJ databases">
        <authorList>
            <consortium name="NIH - Mammalian Gene Collection (MGC) project"/>
        </authorList>
    </citation>
    <scope>NUCLEOTIDE SEQUENCE [LARGE SCALE MRNA]</scope>
    <source>
        <strain>Crossbred X Angus</strain>
        <tissue>Ileum</tissue>
    </source>
</reference>
<comment type="function">
    <text evidence="1">Catalyzes the production of spermine from spermidine and decarboxylated S-adenosylmethionine (dcSAM).</text>
</comment>
<comment type="catalytic activity">
    <reaction evidence="1">
        <text>S-adenosyl 3-(methylsulfanyl)propylamine + spermidine = spermine + S-methyl-5'-thioadenosine + H(+)</text>
        <dbReference type="Rhea" id="RHEA:19973"/>
        <dbReference type="ChEBI" id="CHEBI:15378"/>
        <dbReference type="ChEBI" id="CHEBI:17509"/>
        <dbReference type="ChEBI" id="CHEBI:45725"/>
        <dbReference type="ChEBI" id="CHEBI:57443"/>
        <dbReference type="ChEBI" id="CHEBI:57834"/>
        <dbReference type="EC" id="2.5.1.22"/>
    </reaction>
    <physiologicalReaction direction="left-to-right" evidence="1">
        <dbReference type="Rhea" id="RHEA:19974"/>
    </physiologicalReaction>
</comment>
<comment type="pathway">
    <text evidence="1">Amine and polyamine biosynthesis; spermine biosynthesis; spermine from spermidine: step 1/1.</text>
</comment>
<comment type="subunit">
    <text evidence="1">Homodimer. Dimerization is mediated through the N-terminal domain and seems to be required for activity as deletion of the N-terminal domain causes complete loss of activity.</text>
</comment>
<comment type="domain">
    <text evidence="1">Composed of 3 domains: the N-terminal domain has structural similarity to S-adenosylmethionine decarboxylase, the central domain is made up of four beta strands and the C-terminal domain is similar in structure to spermidine synthase. The N- and C-terminal domains are both required for activity.</text>
</comment>
<comment type="similarity">
    <text evidence="3">Belongs to the spermidine/spermine synthase family.</text>
</comment>